<sequence length="270" mass="29235">MWNSGFESYGSSSYGGAGGYTQSPGGFGSPAPSQAEKKSRARAQHIVPCTISQLLSATLVDEVFRIGNVEISQVTIVGIIRHAEKAPTNIVYKIDDMTAAPMDVRQWVDTDDASSENTVVPPETYVKVAGHLRSFQNKKSLVAFKIMPLEDMNEFTTHILEVINAHMVLSKANSQPSAGRAPISNPGMSEAGNFGGNSFMPANGLTVAQNQVLNLIKACPRPEGLNFQDLKNQLKHMSVSSVKQAMDFLSNEGHIYSTVDDDHFKSTDAE</sequence>
<accession>Q5RC43</accession>
<proteinExistence type="evidence at transcript level"/>
<evidence type="ECO:0000250" key="1"/>
<evidence type="ECO:0000250" key="2">
    <source>
        <dbReference type="UniProtKB" id="P15927"/>
    </source>
</evidence>
<evidence type="ECO:0000256" key="3">
    <source>
        <dbReference type="SAM" id="MobiDB-lite"/>
    </source>
</evidence>
<evidence type="ECO:0000305" key="4"/>
<name>RFA2_PONAB</name>
<feature type="chain" id="PRO_0000097272" description="Replication protein A 32 kDa subunit">
    <location>
        <begin position="1"/>
        <end position="270"/>
    </location>
</feature>
<feature type="DNA-binding region" description="OB">
    <location>
        <begin position="74"/>
        <end position="148"/>
    </location>
</feature>
<feature type="region of interest" description="Disordered" evidence="3">
    <location>
        <begin position="21"/>
        <end position="40"/>
    </location>
</feature>
<feature type="region of interest" description="Interaction with RAD52, TIPIN, UNG and XPA" evidence="1">
    <location>
        <begin position="187"/>
        <end position="270"/>
    </location>
</feature>
<feature type="modified residue" description="N-acetylmethionine" evidence="2">
    <location>
        <position position="1"/>
    </location>
</feature>
<feature type="modified residue" description="Phosphoserine; by PRKDC" evidence="2">
    <location>
        <position position="4"/>
    </location>
</feature>
<feature type="modified residue" description="Phosphoserine; by PRKDC" evidence="2">
    <location>
        <position position="8"/>
    </location>
</feature>
<feature type="modified residue" description="Phosphothreonine; by PRKDC" evidence="2">
    <location>
        <position position="21"/>
    </location>
</feature>
<feature type="modified residue" description="Phosphoserine; by CDK2" evidence="2">
    <location>
        <position position="23"/>
    </location>
</feature>
<feature type="modified residue" description="Phosphoserine; by CDK1" evidence="2">
    <location>
        <position position="29"/>
    </location>
</feature>
<feature type="modified residue" description="Phosphoserine; by PRKDC" evidence="2">
    <location>
        <position position="33"/>
    </location>
</feature>
<feature type="cross-link" description="Glycyl lysine isopeptide (Lys-Gly) (interchain with G-Cter in ubiquitin)" evidence="2">
    <location>
        <position position="37"/>
    </location>
</feature>
<feature type="cross-link" description="Glycyl lysine isopeptide (Lys-Gly) (interchain with G-Cter in ubiquitin)" evidence="2">
    <location>
        <position position="38"/>
    </location>
</feature>
<organism>
    <name type="scientific">Pongo abelii</name>
    <name type="common">Sumatran orangutan</name>
    <name type="synonym">Pongo pygmaeus abelii</name>
    <dbReference type="NCBI Taxonomy" id="9601"/>
    <lineage>
        <taxon>Eukaryota</taxon>
        <taxon>Metazoa</taxon>
        <taxon>Chordata</taxon>
        <taxon>Craniata</taxon>
        <taxon>Vertebrata</taxon>
        <taxon>Euteleostomi</taxon>
        <taxon>Mammalia</taxon>
        <taxon>Eutheria</taxon>
        <taxon>Euarchontoglires</taxon>
        <taxon>Primates</taxon>
        <taxon>Haplorrhini</taxon>
        <taxon>Catarrhini</taxon>
        <taxon>Hominidae</taxon>
        <taxon>Pongo</taxon>
    </lineage>
</organism>
<comment type="function">
    <text evidence="2">As part of the heterotrimeric replication protein A complex (RPA/RP-A), binds and stabilizes single-stranded DNA intermediates, that form during DNA replication or upon DNA stress. It prevents their reannealing and in parallel, recruits and activates different proteins and complexes involved in DNA metabolism. Thereby, it plays an essential role both in DNA replication and the cellular response to DNA damage. In the cellular response to DNA damage, the RPA complex controls DNA repair and DNA damage checkpoint activation. Through recruitment of ATRIP activates the ATR kinase a master regulator of the DNA damage response. It is required for the recruitment of the DNA double-strand break repair factors RAD51 and RAD52 to chromatin in response to DNA damage. Also recruits to sites of DNA damage proteins like XPA and XPG that are involved in nucleotide excision repair and is required for this mechanism of DNA repair. Also plays a role in base excision repair (BER) probably through interaction with UNG. Also recruits SMARCAL1/HARP, which is involved in replication fork restart, to sites of DNA damage. May also play a role in telomere maintenance.</text>
</comment>
<comment type="subunit">
    <text evidence="2">Component of the replication protein A complex (RPA/RP-A), a heterotrimeric complex composed of RPA1, RPA2 and RPA3. Interacts with PRPF19; the PRP19-CDC5L complex is recruited to the sites of DNA repair where it ubiquitinates the replication protein A complex (RPA). Interacts with SERTAD3. Interacts with TIPIN. Interacts with TIMELESS. Interacts with PPP4R2; the interaction is direct, DNA damage-dependent and mediates the recruitment of the PP4 catalytic subunit PPP4C. Interacts (hyperphosphorylated) with RAD51. Interacts with SMARCAL1; the interaction is direct and mediates the recruitment to the RPA complex of SMARCAL1. Interacts with RAD52 and XPA; those interactions are direct and associate RAD52 and XPA to the RPA complex. Interacts with FBH1. Interacts with ETAA1; the interaction is direct and promotes ETAA1 recruitment at stalled replication forks. Interacts with DDI2 (By similarity). Interacts (in unphosphorylated form via N-terminus) with EIF4EBP3; the interaction enhances EIF4EBP3-mediated inhibition of EIF4E-mediated mRNA nuclear export (By similarity).</text>
</comment>
<comment type="subcellular location">
    <subcellularLocation>
        <location evidence="2">Nucleus</location>
    </subcellularLocation>
    <subcellularLocation>
        <location evidence="2">Nucleus</location>
        <location evidence="2">PML body</location>
    </subcellularLocation>
    <text evidence="2">Redistributes to discrete nuclear foci upon DNA damage in an ATR-dependent manner.</text>
</comment>
<comment type="PTM">
    <text evidence="2">Differentially phosphorylated throughout the cell cycle, becoming phosphorylated at the G1-S transition and dephosphorylated in late mitosis. Mainly phosphorylated at Ser-23 and Ser-29, by cyclin A-CDK2 and cyclin B-CDK1, respectively during DNA replication and mitosis. Dephosphorylation may require the serine/threonine-protein phosphatase 4. Phosphorylation at Ser-23 and Ser-29 is a prerequisite for further phosphorylation. Becomes hyperphosphorylated on additional residues including Ser-4, Ser-8, Thr-21 and Ser-33 in response to DNA damage. Hyperphosphorylation is mediated by ATM, ATR and PRKDC. Primarily recruited to DNA repair nuclear foci as a hypophosphorylated form it undergoes subsequent hyperphosphorylation, catalyzed by ATR. Hyperphosphorylation is required for RAD51 recruitment to chromatin and efficient DNA repair. Phosphorylation at Thr-21 depends upon RFWD3 presence.</text>
</comment>
<comment type="PTM">
    <text evidence="2">DNA damage-induced 'Lys-63'-linked polyubiquitination by PRPF19 mediates ATRIP recruitment to the RPA complex at sites of DNA damage and activation of ATR. Ubiquitinated by RFWD3 at stalled replication forks in response to DNA damage: ubiquitination by RFWD3 does not lead to degradation by the proteasome and promotes removal of the RPA complex from stalled replication forks, promoting homologous recombination.</text>
</comment>
<comment type="similarity">
    <text evidence="4">Belongs to the replication factor A protein 2 family.</text>
</comment>
<dbReference type="EMBL" id="CR858438">
    <property type="protein sequence ID" value="CAH90667.1"/>
    <property type="molecule type" value="mRNA"/>
</dbReference>
<dbReference type="RefSeq" id="NP_001125362.2">
    <property type="nucleotide sequence ID" value="NM_001131890.2"/>
</dbReference>
<dbReference type="BMRB" id="Q5RC43"/>
<dbReference type="SMR" id="Q5RC43"/>
<dbReference type="STRING" id="9601.ENSPPYP00000001907"/>
<dbReference type="GeneID" id="100172265"/>
<dbReference type="KEGG" id="pon:100172265"/>
<dbReference type="CTD" id="6118"/>
<dbReference type="eggNOG" id="KOG3108">
    <property type="taxonomic scope" value="Eukaryota"/>
</dbReference>
<dbReference type="InParanoid" id="Q5RC43"/>
<dbReference type="OrthoDB" id="25571at2759"/>
<dbReference type="Proteomes" id="UP000001595">
    <property type="component" value="Unplaced"/>
</dbReference>
<dbReference type="GO" id="GO:0000781">
    <property type="term" value="C:chromosome, telomeric region"/>
    <property type="evidence" value="ECO:0007669"/>
    <property type="project" value="TreeGrafter"/>
</dbReference>
<dbReference type="GO" id="GO:0005662">
    <property type="term" value="C:DNA replication factor A complex"/>
    <property type="evidence" value="ECO:0000250"/>
    <property type="project" value="UniProtKB"/>
</dbReference>
<dbReference type="GO" id="GO:0005634">
    <property type="term" value="C:nucleus"/>
    <property type="evidence" value="ECO:0000250"/>
    <property type="project" value="UniProtKB"/>
</dbReference>
<dbReference type="GO" id="GO:0016605">
    <property type="term" value="C:PML body"/>
    <property type="evidence" value="ECO:0000250"/>
    <property type="project" value="UniProtKB"/>
</dbReference>
<dbReference type="GO" id="GO:0035861">
    <property type="term" value="C:site of double-strand break"/>
    <property type="evidence" value="ECO:0007669"/>
    <property type="project" value="TreeGrafter"/>
</dbReference>
<dbReference type="GO" id="GO:0003684">
    <property type="term" value="F:damaged DNA binding"/>
    <property type="evidence" value="ECO:0000250"/>
    <property type="project" value="UniProtKB"/>
</dbReference>
<dbReference type="GO" id="GO:0003697">
    <property type="term" value="F:single-stranded DNA binding"/>
    <property type="evidence" value="ECO:0000250"/>
    <property type="project" value="UniProtKB"/>
</dbReference>
<dbReference type="GO" id="GO:0006284">
    <property type="term" value="P:base-excision repair"/>
    <property type="evidence" value="ECO:0000250"/>
    <property type="project" value="UniProtKB"/>
</dbReference>
<dbReference type="GO" id="GO:0006260">
    <property type="term" value="P:DNA replication"/>
    <property type="evidence" value="ECO:0000250"/>
    <property type="project" value="UniProtKB"/>
</dbReference>
<dbReference type="GO" id="GO:0000724">
    <property type="term" value="P:double-strand break repair via homologous recombination"/>
    <property type="evidence" value="ECO:0000250"/>
    <property type="project" value="UniProtKB"/>
</dbReference>
<dbReference type="GO" id="GO:0006298">
    <property type="term" value="P:mismatch repair"/>
    <property type="evidence" value="ECO:0000250"/>
    <property type="project" value="UniProtKB"/>
</dbReference>
<dbReference type="GO" id="GO:0006289">
    <property type="term" value="P:nucleotide-excision repair"/>
    <property type="evidence" value="ECO:0000250"/>
    <property type="project" value="UniProtKB"/>
</dbReference>
<dbReference type="GO" id="GO:0034502">
    <property type="term" value="P:protein localization to chromosome"/>
    <property type="evidence" value="ECO:0000250"/>
    <property type="project" value="UniProtKB"/>
</dbReference>
<dbReference type="GO" id="GO:2000001">
    <property type="term" value="P:regulation of DNA damage checkpoint"/>
    <property type="evidence" value="ECO:0000250"/>
    <property type="project" value="UniProtKB"/>
</dbReference>
<dbReference type="GO" id="GO:0010569">
    <property type="term" value="P:regulation of double-strand break repair via homologous recombination"/>
    <property type="evidence" value="ECO:0000250"/>
    <property type="project" value="UniProtKB"/>
</dbReference>
<dbReference type="GO" id="GO:0000723">
    <property type="term" value="P:telomere maintenance"/>
    <property type="evidence" value="ECO:0000250"/>
    <property type="project" value="UniProtKB"/>
</dbReference>
<dbReference type="CDD" id="cd04478">
    <property type="entry name" value="RPA2_DBD_D"/>
    <property type="match status" value="1"/>
</dbReference>
<dbReference type="FunFam" id="1.10.10.10:FF:000168">
    <property type="entry name" value="Replication protein A 32 kDa subunit"/>
    <property type="match status" value="1"/>
</dbReference>
<dbReference type="FunFam" id="2.40.50.140:FF:000149">
    <property type="entry name" value="Replication protein A 32 kDa subunit"/>
    <property type="match status" value="1"/>
</dbReference>
<dbReference type="Gene3D" id="2.40.50.140">
    <property type="entry name" value="Nucleic acid-binding proteins"/>
    <property type="match status" value="1"/>
</dbReference>
<dbReference type="Gene3D" id="1.10.10.10">
    <property type="entry name" value="Winged helix-like DNA-binding domain superfamily/Winged helix DNA-binding domain"/>
    <property type="match status" value="1"/>
</dbReference>
<dbReference type="InterPro" id="IPR012340">
    <property type="entry name" value="NA-bd_OB-fold"/>
</dbReference>
<dbReference type="InterPro" id="IPR040260">
    <property type="entry name" value="RFA2-like"/>
</dbReference>
<dbReference type="InterPro" id="IPR014646">
    <property type="entry name" value="Rfa2/RPA32"/>
</dbReference>
<dbReference type="InterPro" id="IPR014892">
    <property type="entry name" value="RPA_C"/>
</dbReference>
<dbReference type="InterPro" id="IPR036388">
    <property type="entry name" value="WH-like_DNA-bd_sf"/>
</dbReference>
<dbReference type="InterPro" id="IPR036390">
    <property type="entry name" value="WH_DNA-bd_sf"/>
</dbReference>
<dbReference type="PANTHER" id="PTHR13989:SF54">
    <property type="entry name" value="REPLICATION PROTEIN A 32 KDA SUBUNIT"/>
    <property type="match status" value="1"/>
</dbReference>
<dbReference type="PANTHER" id="PTHR13989">
    <property type="entry name" value="REPLICATION PROTEIN A-RELATED"/>
    <property type="match status" value="1"/>
</dbReference>
<dbReference type="Pfam" id="PF08784">
    <property type="entry name" value="RPA_C"/>
    <property type="match status" value="1"/>
</dbReference>
<dbReference type="PIRSF" id="PIRSF036949">
    <property type="entry name" value="RPA32"/>
    <property type="match status" value="1"/>
</dbReference>
<dbReference type="SUPFAM" id="SSF50249">
    <property type="entry name" value="Nucleic acid-binding proteins"/>
    <property type="match status" value="1"/>
</dbReference>
<dbReference type="SUPFAM" id="SSF46785">
    <property type="entry name" value="Winged helix' DNA-binding domain"/>
    <property type="match status" value="1"/>
</dbReference>
<reference key="1">
    <citation type="submission" date="2004-11" db="EMBL/GenBank/DDBJ databases">
        <authorList>
            <consortium name="The German cDNA consortium"/>
        </authorList>
    </citation>
    <scope>NUCLEOTIDE SEQUENCE [LARGE SCALE MRNA]</scope>
    <source>
        <tissue>Heart</tissue>
    </source>
</reference>
<gene>
    <name type="primary">RPA2</name>
</gene>
<keyword id="KW-0007">Acetylation</keyword>
<keyword id="KW-0227">DNA damage</keyword>
<keyword id="KW-0233">DNA recombination</keyword>
<keyword id="KW-0234">DNA repair</keyword>
<keyword id="KW-0235">DNA replication</keyword>
<keyword id="KW-0238">DNA-binding</keyword>
<keyword id="KW-1017">Isopeptide bond</keyword>
<keyword id="KW-0539">Nucleus</keyword>
<keyword id="KW-0597">Phosphoprotein</keyword>
<keyword id="KW-1185">Reference proteome</keyword>
<keyword id="KW-0832">Ubl conjugation</keyword>
<protein>
    <recommendedName>
        <fullName>Replication protein A 32 kDa subunit</fullName>
        <shortName>RP-A p32</shortName>
    </recommendedName>
    <alternativeName>
        <fullName>Replication factor A protein 2</fullName>
        <shortName>RF-A protein 2</shortName>
    </alternativeName>
</protein>